<feature type="chain" id="PRO_0000089517" description="SAYSvFN domain-containing protein 1">
    <location>
        <begin position="1"/>
        <end position="183"/>
    </location>
</feature>
<feature type="topological domain" description="Cytoplasmic" evidence="7">
    <location>
        <begin position="1"/>
        <end position="105"/>
    </location>
</feature>
<feature type="intramembrane region" description="Helical" evidence="7">
    <location>
        <begin position="106"/>
        <end position="126"/>
    </location>
</feature>
<feature type="topological domain" description="Cytoplasmic" evidence="7">
    <location>
        <begin position="127"/>
        <end position="183"/>
    </location>
</feature>
<feature type="region of interest" description="Disordered" evidence="1">
    <location>
        <begin position="11"/>
        <end position="36"/>
    </location>
</feature>
<feature type="region of interest" description="Middle helical (MH)" evidence="7">
    <location>
        <begin position="91"/>
        <end position="105"/>
    </location>
</feature>
<feature type="compositionally biased region" description="Low complexity" evidence="1">
    <location>
        <begin position="16"/>
        <end position="36"/>
    </location>
</feature>
<feature type="splice variant" id="VSP_014597" description="In isoform 2." evidence="4">
    <location>
        <begin position="1"/>
        <end position="67"/>
    </location>
</feature>
<feature type="splice variant" id="VSP_014598" description="In isoform 2." evidence="4">
    <original>VQ</original>
    <variation>ML</variation>
    <location>
        <begin position="68"/>
        <end position="69"/>
    </location>
</feature>
<feature type="mutagenesis site" description="In 3A mutant; abolished interaction with ribosomes." evidence="3">
    <original>LAEFRAAR</original>
    <variation>AAARAAA</variation>
    <location>
        <begin position="5"/>
        <end position="12"/>
    </location>
</feature>
<feature type="mutagenesis site" description="Abolished interaction with ribosomes." evidence="3">
    <original>EFRAARKR</original>
    <variation>AAAAAAAA</variation>
    <location>
        <begin position="7"/>
        <end position="14"/>
    </location>
</feature>
<feature type="mutagenesis site" description="In 7A mutant; abolished involvement in the translocation-associated quality control pathway." evidence="3">
    <original>SAYSVFN</original>
    <variation>AAAAAAA</variation>
    <location>
        <begin position="150"/>
        <end position="156"/>
    </location>
</feature>
<accession>Q9NPB0</accession>
<accession>Q9H0D8</accession>
<name>SAYS1_HUMAN</name>
<comment type="function">
    <text evidence="3">Ufmylation 'reader' component of a translocation-associated quality control pathway, a mechanism that takes place when a ribosome has stalled during translation, and which is required to degrade clogged substrates (PubMed:36848233). Specifically recognizes and binds ufmylated ribosomes when a ribosome has stalled, promoting the transport of stalled nascent chain via the TRAPP complex to lysosomes for degradation (PubMed:36848233).</text>
</comment>
<comment type="subunit">
    <text evidence="3">Associates (via N-terminus) with ribosomes.</text>
</comment>
<comment type="subcellular location">
    <subcellularLocation>
        <location evidence="3">Endoplasmic reticulum membrane</location>
    </subcellularLocation>
    <subcellularLocation>
        <location evidence="2">Cytoplasmic vesicle membrane</location>
    </subcellularLocation>
</comment>
<comment type="alternative products">
    <event type="alternative splicing"/>
    <isoform>
        <id>Q9NPB0-1</id>
        <name>1</name>
        <sequence type="displayed"/>
    </isoform>
    <isoform>
        <id>Q9NPB0-2</id>
        <name>2</name>
        <sequence type="described" ref="VSP_014597 VSP_014598"/>
    </isoform>
</comment>
<comment type="domain">
    <text evidence="3">The middle helical (MH) region recognizes and binds ufmylated ribosomes.</text>
</comment>
<comment type="similarity">
    <text evidence="6">Belongs to the SAYSD1 family.</text>
</comment>
<sequence length="183" mass="20163">MEQRLAEFRAARKRAGLAAQPPAASQGAQTPGEKAEAAATLKAAPGWLKRFLVWKPRPASARAQPGLVQEAAQPQGSTSETPWNTAIPLPSCWDQSFLTNITFLKVLLWLVLLGLFVELEFGLAYFVLSLFYWMYVGTRGPEEKKEGEKSAYSVFNPGCEAIQGTLTAEQLERELQLRPLAGR</sequence>
<evidence type="ECO:0000256" key="1">
    <source>
        <dbReference type="SAM" id="MobiDB-lite"/>
    </source>
</evidence>
<evidence type="ECO:0000269" key="2">
    <source>
    </source>
</evidence>
<evidence type="ECO:0000269" key="3">
    <source>
    </source>
</evidence>
<evidence type="ECO:0000303" key="4">
    <source>
    </source>
</evidence>
<evidence type="ECO:0000303" key="5">
    <source>
    </source>
</evidence>
<evidence type="ECO:0000305" key="6"/>
<evidence type="ECO:0000305" key="7">
    <source>
    </source>
</evidence>
<evidence type="ECO:0000312" key="8">
    <source>
        <dbReference type="HGNC" id="HGNC:21025"/>
    </source>
</evidence>
<organism>
    <name type="scientific">Homo sapiens</name>
    <name type="common">Human</name>
    <dbReference type="NCBI Taxonomy" id="9606"/>
    <lineage>
        <taxon>Eukaryota</taxon>
        <taxon>Metazoa</taxon>
        <taxon>Chordata</taxon>
        <taxon>Craniata</taxon>
        <taxon>Vertebrata</taxon>
        <taxon>Euteleostomi</taxon>
        <taxon>Mammalia</taxon>
        <taxon>Eutheria</taxon>
        <taxon>Euarchontoglires</taxon>
        <taxon>Primates</taxon>
        <taxon>Haplorrhini</taxon>
        <taxon>Catarrhini</taxon>
        <taxon>Hominidae</taxon>
        <taxon>Homo</taxon>
    </lineage>
</organism>
<reference key="1">
    <citation type="journal article" date="2001" name="Genome Res.">
        <title>Towards a catalog of human genes and proteins: sequencing and analysis of 500 novel complete protein coding human cDNAs.</title>
        <authorList>
            <person name="Wiemann S."/>
            <person name="Weil B."/>
            <person name="Wellenreuther R."/>
            <person name="Gassenhuber J."/>
            <person name="Glassl S."/>
            <person name="Ansorge W."/>
            <person name="Boecher M."/>
            <person name="Bloecker H."/>
            <person name="Bauersachs S."/>
            <person name="Blum H."/>
            <person name="Lauber J."/>
            <person name="Duesterhoeft A."/>
            <person name="Beyer A."/>
            <person name="Koehrer K."/>
            <person name="Strack N."/>
            <person name="Mewes H.-W."/>
            <person name="Ottenwaelder B."/>
            <person name="Obermaier B."/>
            <person name="Tampe J."/>
            <person name="Heubner D."/>
            <person name="Wambutt R."/>
            <person name="Korn B."/>
            <person name="Klein M."/>
            <person name="Poustka A."/>
        </authorList>
    </citation>
    <scope>NUCLEOTIDE SEQUENCE [LARGE SCALE MRNA] (ISOFORM 2)</scope>
    <source>
        <tissue>Testis</tissue>
    </source>
</reference>
<reference key="2">
    <citation type="journal article" date="2004" name="Nat. Genet.">
        <title>Complete sequencing and characterization of 21,243 full-length human cDNAs.</title>
        <authorList>
            <person name="Ota T."/>
            <person name="Suzuki Y."/>
            <person name="Nishikawa T."/>
            <person name="Otsuki T."/>
            <person name="Sugiyama T."/>
            <person name="Irie R."/>
            <person name="Wakamatsu A."/>
            <person name="Hayashi K."/>
            <person name="Sato H."/>
            <person name="Nagai K."/>
            <person name="Kimura K."/>
            <person name="Makita H."/>
            <person name="Sekine M."/>
            <person name="Obayashi M."/>
            <person name="Nishi T."/>
            <person name="Shibahara T."/>
            <person name="Tanaka T."/>
            <person name="Ishii S."/>
            <person name="Yamamoto J."/>
            <person name="Saito K."/>
            <person name="Kawai Y."/>
            <person name="Isono Y."/>
            <person name="Nakamura Y."/>
            <person name="Nagahari K."/>
            <person name="Murakami K."/>
            <person name="Yasuda T."/>
            <person name="Iwayanagi T."/>
            <person name="Wagatsuma M."/>
            <person name="Shiratori A."/>
            <person name="Sudo H."/>
            <person name="Hosoiri T."/>
            <person name="Kaku Y."/>
            <person name="Kodaira H."/>
            <person name="Kondo H."/>
            <person name="Sugawara M."/>
            <person name="Takahashi M."/>
            <person name="Kanda K."/>
            <person name="Yokoi T."/>
            <person name="Furuya T."/>
            <person name="Kikkawa E."/>
            <person name="Omura Y."/>
            <person name="Abe K."/>
            <person name="Kamihara K."/>
            <person name="Katsuta N."/>
            <person name="Sato K."/>
            <person name="Tanikawa M."/>
            <person name="Yamazaki M."/>
            <person name="Ninomiya K."/>
            <person name="Ishibashi T."/>
            <person name="Yamashita H."/>
            <person name="Murakawa K."/>
            <person name="Fujimori K."/>
            <person name="Tanai H."/>
            <person name="Kimata M."/>
            <person name="Watanabe M."/>
            <person name="Hiraoka S."/>
            <person name="Chiba Y."/>
            <person name="Ishida S."/>
            <person name="Ono Y."/>
            <person name="Takiguchi S."/>
            <person name="Watanabe S."/>
            <person name="Yosida M."/>
            <person name="Hotuta T."/>
            <person name="Kusano J."/>
            <person name="Kanehori K."/>
            <person name="Takahashi-Fujii A."/>
            <person name="Hara H."/>
            <person name="Tanase T.-O."/>
            <person name="Nomura Y."/>
            <person name="Togiya S."/>
            <person name="Komai F."/>
            <person name="Hara R."/>
            <person name="Takeuchi K."/>
            <person name="Arita M."/>
            <person name="Imose N."/>
            <person name="Musashino K."/>
            <person name="Yuuki H."/>
            <person name="Oshima A."/>
            <person name="Sasaki N."/>
            <person name="Aotsuka S."/>
            <person name="Yoshikawa Y."/>
            <person name="Matsunawa H."/>
            <person name="Ichihara T."/>
            <person name="Shiohata N."/>
            <person name="Sano S."/>
            <person name="Moriya S."/>
            <person name="Momiyama H."/>
            <person name="Satoh N."/>
            <person name="Takami S."/>
            <person name="Terashima Y."/>
            <person name="Suzuki O."/>
            <person name="Nakagawa S."/>
            <person name="Senoh A."/>
            <person name="Mizoguchi H."/>
            <person name="Goto Y."/>
            <person name="Shimizu F."/>
            <person name="Wakebe H."/>
            <person name="Hishigaki H."/>
            <person name="Watanabe T."/>
            <person name="Sugiyama A."/>
            <person name="Takemoto M."/>
            <person name="Kawakami B."/>
            <person name="Yamazaki M."/>
            <person name="Watanabe K."/>
            <person name="Kumagai A."/>
            <person name="Itakura S."/>
            <person name="Fukuzumi Y."/>
            <person name="Fujimori Y."/>
            <person name="Komiyama M."/>
            <person name="Tashiro H."/>
            <person name="Tanigami A."/>
            <person name="Fujiwara T."/>
            <person name="Ono T."/>
            <person name="Yamada K."/>
            <person name="Fujii Y."/>
            <person name="Ozaki K."/>
            <person name="Hirao M."/>
            <person name="Ohmori Y."/>
            <person name="Kawabata A."/>
            <person name="Hikiji T."/>
            <person name="Kobatake N."/>
            <person name="Inagaki H."/>
            <person name="Ikema Y."/>
            <person name="Okamoto S."/>
            <person name="Okitani R."/>
            <person name="Kawakami T."/>
            <person name="Noguchi S."/>
            <person name="Itoh T."/>
            <person name="Shigeta K."/>
            <person name="Senba T."/>
            <person name="Matsumura K."/>
            <person name="Nakajima Y."/>
            <person name="Mizuno T."/>
            <person name="Morinaga M."/>
            <person name="Sasaki M."/>
            <person name="Togashi T."/>
            <person name="Oyama M."/>
            <person name="Hata H."/>
            <person name="Watanabe M."/>
            <person name="Komatsu T."/>
            <person name="Mizushima-Sugano J."/>
            <person name="Satoh T."/>
            <person name="Shirai Y."/>
            <person name="Takahashi Y."/>
            <person name="Nakagawa K."/>
            <person name="Okumura K."/>
            <person name="Nagase T."/>
            <person name="Nomura N."/>
            <person name="Kikuchi H."/>
            <person name="Masuho Y."/>
            <person name="Yamashita R."/>
            <person name="Nakai K."/>
            <person name="Yada T."/>
            <person name="Nakamura Y."/>
            <person name="Ohara O."/>
            <person name="Isogai T."/>
            <person name="Sugano S."/>
        </authorList>
    </citation>
    <scope>NUCLEOTIDE SEQUENCE [LARGE SCALE MRNA] (ISOFORM 1)</scope>
    <source>
        <tissue>Placenta</tissue>
    </source>
</reference>
<reference key="3">
    <citation type="journal article" date="2003" name="Nature">
        <title>The DNA sequence and analysis of human chromosome 6.</title>
        <authorList>
            <person name="Mungall A.J."/>
            <person name="Palmer S.A."/>
            <person name="Sims S.K."/>
            <person name="Edwards C.A."/>
            <person name="Ashurst J.L."/>
            <person name="Wilming L."/>
            <person name="Jones M.C."/>
            <person name="Horton R."/>
            <person name="Hunt S.E."/>
            <person name="Scott C.E."/>
            <person name="Gilbert J.G.R."/>
            <person name="Clamp M.E."/>
            <person name="Bethel G."/>
            <person name="Milne S."/>
            <person name="Ainscough R."/>
            <person name="Almeida J.P."/>
            <person name="Ambrose K.D."/>
            <person name="Andrews T.D."/>
            <person name="Ashwell R.I.S."/>
            <person name="Babbage A.K."/>
            <person name="Bagguley C.L."/>
            <person name="Bailey J."/>
            <person name="Banerjee R."/>
            <person name="Barker D.J."/>
            <person name="Barlow K.F."/>
            <person name="Bates K."/>
            <person name="Beare D.M."/>
            <person name="Beasley H."/>
            <person name="Beasley O."/>
            <person name="Bird C.P."/>
            <person name="Blakey S.E."/>
            <person name="Bray-Allen S."/>
            <person name="Brook J."/>
            <person name="Brown A.J."/>
            <person name="Brown J.Y."/>
            <person name="Burford D.C."/>
            <person name="Burrill W."/>
            <person name="Burton J."/>
            <person name="Carder C."/>
            <person name="Carter N.P."/>
            <person name="Chapman J.C."/>
            <person name="Clark S.Y."/>
            <person name="Clark G."/>
            <person name="Clee C.M."/>
            <person name="Clegg S."/>
            <person name="Cobley V."/>
            <person name="Collier R.E."/>
            <person name="Collins J.E."/>
            <person name="Colman L.K."/>
            <person name="Corby N.R."/>
            <person name="Coville G.J."/>
            <person name="Culley K.M."/>
            <person name="Dhami P."/>
            <person name="Davies J."/>
            <person name="Dunn M."/>
            <person name="Earthrowl M.E."/>
            <person name="Ellington A.E."/>
            <person name="Evans K.A."/>
            <person name="Faulkner L."/>
            <person name="Francis M.D."/>
            <person name="Frankish A."/>
            <person name="Frankland J."/>
            <person name="French L."/>
            <person name="Garner P."/>
            <person name="Garnett J."/>
            <person name="Ghori M.J."/>
            <person name="Gilby L.M."/>
            <person name="Gillson C.J."/>
            <person name="Glithero R.J."/>
            <person name="Grafham D.V."/>
            <person name="Grant M."/>
            <person name="Gribble S."/>
            <person name="Griffiths C."/>
            <person name="Griffiths M.N.D."/>
            <person name="Hall R."/>
            <person name="Halls K.S."/>
            <person name="Hammond S."/>
            <person name="Harley J.L."/>
            <person name="Hart E.A."/>
            <person name="Heath P.D."/>
            <person name="Heathcott R."/>
            <person name="Holmes S.J."/>
            <person name="Howden P.J."/>
            <person name="Howe K.L."/>
            <person name="Howell G.R."/>
            <person name="Huckle E."/>
            <person name="Humphray S.J."/>
            <person name="Humphries M.D."/>
            <person name="Hunt A.R."/>
            <person name="Johnson C.M."/>
            <person name="Joy A.A."/>
            <person name="Kay M."/>
            <person name="Keenan S.J."/>
            <person name="Kimberley A.M."/>
            <person name="King A."/>
            <person name="Laird G.K."/>
            <person name="Langford C."/>
            <person name="Lawlor S."/>
            <person name="Leongamornlert D.A."/>
            <person name="Leversha M."/>
            <person name="Lloyd C.R."/>
            <person name="Lloyd D.M."/>
            <person name="Loveland J.E."/>
            <person name="Lovell J."/>
            <person name="Martin S."/>
            <person name="Mashreghi-Mohammadi M."/>
            <person name="Maslen G.L."/>
            <person name="Matthews L."/>
            <person name="McCann O.T."/>
            <person name="McLaren S.J."/>
            <person name="McLay K."/>
            <person name="McMurray A."/>
            <person name="Moore M.J.F."/>
            <person name="Mullikin J.C."/>
            <person name="Niblett D."/>
            <person name="Nickerson T."/>
            <person name="Novik K.L."/>
            <person name="Oliver K."/>
            <person name="Overton-Larty E.K."/>
            <person name="Parker A."/>
            <person name="Patel R."/>
            <person name="Pearce A.V."/>
            <person name="Peck A.I."/>
            <person name="Phillimore B.J.C.T."/>
            <person name="Phillips S."/>
            <person name="Plumb R.W."/>
            <person name="Porter K.M."/>
            <person name="Ramsey Y."/>
            <person name="Ranby S.A."/>
            <person name="Rice C.M."/>
            <person name="Ross M.T."/>
            <person name="Searle S.M."/>
            <person name="Sehra H.K."/>
            <person name="Sheridan E."/>
            <person name="Skuce C.D."/>
            <person name="Smith S."/>
            <person name="Smith M."/>
            <person name="Spraggon L."/>
            <person name="Squares S.L."/>
            <person name="Steward C.A."/>
            <person name="Sycamore N."/>
            <person name="Tamlyn-Hall G."/>
            <person name="Tester J."/>
            <person name="Theaker A.J."/>
            <person name="Thomas D.W."/>
            <person name="Thorpe A."/>
            <person name="Tracey A."/>
            <person name="Tromans A."/>
            <person name="Tubby B."/>
            <person name="Wall M."/>
            <person name="Wallis J.M."/>
            <person name="West A.P."/>
            <person name="White S.S."/>
            <person name="Whitehead S.L."/>
            <person name="Whittaker H."/>
            <person name="Wild A."/>
            <person name="Willey D.J."/>
            <person name="Wilmer T.E."/>
            <person name="Wood J.M."/>
            <person name="Wray P.W."/>
            <person name="Wyatt J.C."/>
            <person name="Young L."/>
            <person name="Younger R.M."/>
            <person name="Bentley D.R."/>
            <person name="Coulson A."/>
            <person name="Durbin R.M."/>
            <person name="Hubbard T."/>
            <person name="Sulston J.E."/>
            <person name="Dunham I."/>
            <person name="Rogers J."/>
            <person name="Beck S."/>
        </authorList>
    </citation>
    <scope>NUCLEOTIDE SEQUENCE [LARGE SCALE GENOMIC DNA]</scope>
</reference>
<reference key="4">
    <citation type="journal article" date="2004" name="Genome Res.">
        <title>The status, quality, and expansion of the NIH full-length cDNA project: the Mammalian Gene Collection (MGC).</title>
        <authorList>
            <consortium name="The MGC Project Team"/>
        </authorList>
    </citation>
    <scope>NUCLEOTIDE SEQUENCE [LARGE SCALE MRNA] (ISOFORM 1)</scope>
    <source>
        <tissue>Testis</tissue>
    </source>
</reference>
<reference key="5">
    <citation type="journal article" date="2012" name="J. Proteomics">
        <title>Systematic validation of antibody binding and protein subcellular localization using siRNA and confocal microscopy.</title>
        <authorList>
            <person name="Stadler C."/>
            <person name="Hjelmare M."/>
            <person name="Neumann B."/>
            <person name="Jonasson K."/>
            <person name="Pepperkok R."/>
            <person name="Uhlen M."/>
            <person name="Lundberg E."/>
        </authorList>
    </citation>
    <scope>SUBCELLULAR LOCATION</scope>
</reference>
<reference key="6">
    <citation type="journal article" date="2023" name="Cell Rep.">
        <title>SAYSD1 senses UFMylated ribosome to safeguard co-translational protein translocation at the endoplasmic reticulum.</title>
        <authorList>
            <person name="Wang L."/>
            <person name="Xu Y."/>
            <person name="Yun S."/>
            <person name="Yuan Q."/>
            <person name="Satpute-Krishnan P."/>
            <person name="Ye Y."/>
        </authorList>
    </citation>
    <scope>FUNCTION</scope>
    <scope>SUBCELLULAR LOCATION</scope>
    <scope>TOPOLOGY</scope>
    <scope>INTERACTION WITH RIBOSOMES</scope>
    <scope>DOMAIN</scope>
    <scope>MUTAGENESIS OF 5-LEU--ARG-12; 7-GLU--ARG-14 AND 150-SER--ASN-156</scope>
</reference>
<protein>
    <recommendedName>
        <fullName evidence="6">SAYSvFN domain-containing protein 1</fullName>
    </recommendedName>
</protein>
<proteinExistence type="evidence at protein level"/>
<gene>
    <name evidence="5 8" type="primary">SAYSD1</name>
    <name evidence="8" type="synonym">C6orf64</name>
</gene>
<keyword id="KW-0025">Alternative splicing</keyword>
<keyword id="KW-0968">Cytoplasmic vesicle</keyword>
<keyword id="KW-0256">Endoplasmic reticulum</keyword>
<keyword id="KW-0472">Membrane</keyword>
<keyword id="KW-1267">Proteomics identification</keyword>
<keyword id="KW-1185">Reference proteome</keyword>
<dbReference type="EMBL" id="AL136839">
    <property type="protein sequence ID" value="CAB66773.1"/>
    <property type="molecule type" value="mRNA"/>
</dbReference>
<dbReference type="EMBL" id="AK001963">
    <property type="protein sequence ID" value="BAA92004.1"/>
    <property type="molecule type" value="mRNA"/>
</dbReference>
<dbReference type="EMBL" id="AL035690">
    <property type="status" value="NOT_ANNOTATED_CDS"/>
    <property type="molecule type" value="Genomic_DNA"/>
</dbReference>
<dbReference type="EMBL" id="BC022007">
    <property type="protein sequence ID" value="AAH22007.1"/>
    <property type="molecule type" value="mRNA"/>
</dbReference>
<dbReference type="CCDS" id="CCDS4840.1">
    <molecule id="Q9NPB0-1"/>
</dbReference>
<dbReference type="RefSeq" id="NP_001291722.1">
    <molecule id="Q9NPB0-2"/>
    <property type="nucleotide sequence ID" value="NM_001304793.2"/>
</dbReference>
<dbReference type="RefSeq" id="NP_060792.1">
    <molecule id="Q9NPB0-1"/>
    <property type="nucleotide sequence ID" value="NM_018322.3"/>
</dbReference>
<dbReference type="SMR" id="Q9NPB0"/>
<dbReference type="BioGRID" id="120891">
    <property type="interactions" value="38"/>
</dbReference>
<dbReference type="FunCoup" id="Q9NPB0">
    <property type="interactions" value="1308"/>
</dbReference>
<dbReference type="IntAct" id="Q9NPB0">
    <property type="interactions" value="28"/>
</dbReference>
<dbReference type="MINT" id="Q9NPB0"/>
<dbReference type="STRING" id="9606.ENSP00000229903"/>
<dbReference type="iPTMnet" id="Q9NPB0"/>
<dbReference type="PhosphoSitePlus" id="Q9NPB0"/>
<dbReference type="BioMuta" id="SAYSD1"/>
<dbReference type="DMDM" id="68565322"/>
<dbReference type="jPOST" id="Q9NPB0"/>
<dbReference type="MassIVE" id="Q9NPB0"/>
<dbReference type="PaxDb" id="9606-ENSP00000229903"/>
<dbReference type="PeptideAtlas" id="Q9NPB0"/>
<dbReference type="ProteomicsDB" id="81954">
    <molecule id="Q9NPB0-1"/>
</dbReference>
<dbReference type="ProteomicsDB" id="81955">
    <molecule id="Q9NPB0-2"/>
</dbReference>
<dbReference type="Pumba" id="Q9NPB0"/>
<dbReference type="Antibodypedia" id="2340">
    <property type="antibodies" value="109 antibodies from 16 providers"/>
</dbReference>
<dbReference type="DNASU" id="55776"/>
<dbReference type="Ensembl" id="ENST00000229903.5">
    <molecule id="Q9NPB0-1"/>
    <property type="protein sequence ID" value="ENSP00000229903.4"/>
    <property type="gene ID" value="ENSG00000112167.11"/>
</dbReference>
<dbReference type="GeneID" id="55776"/>
<dbReference type="KEGG" id="hsa:55776"/>
<dbReference type="MANE-Select" id="ENST00000229903.5">
    <property type="protein sequence ID" value="ENSP00000229903.4"/>
    <property type="RefSeq nucleotide sequence ID" value="NM_018322.3"/>
    <property type="RefSeq protein sequence ID" value="NP_060792.1"/>
</dbReference>
<dbReference type="UCSC" id="uc003ook.2">
    <molecule id="Q9NPB0-1"/>
    <property type="organism name" value="human"/>
</dbReference>
<dbReference type="AGR" id="HGNC:21025"/>
<dbReference type="CTD" id="55776"/>
<dbReference type="DisGeNET" id="55776"/>
<dbReference type="GeneCards" id="SAYSD1"/>
<dbReference type="HGNC" id="HGNC:21025">
    <property type="gene designation" value="SAYSD1"/>
</dbReference>
<dbReference type="HPA" id="ENSG00000112167">
    <property type="expression patterns" value="Tissue enhanced (testis)"/>
</dbReference>
<dbReference type="neXtProt" id="NX_Q9NPB0"/>
<dbReference type="OpenTargets" id="ENSG00000112167"/>
<dbReference type="PharmGKB" id="PA128394689"/>
<dbReference type="VEuPathDB" id="HostDB:ENSG00000112167"/>
<dbReference type="eggNOG" id="KOG3249">
    <property type="taxonomic scope" value="Eukaryota"/>
</dbReference>
<dbReference type="GeneTree" id="ENSGT00390000004313"/>
<dbReference type="HOGENOM" id="CLU_114258_0_1_1"/>
<dbReference type="InParanoid" id="Q9NPB0"/>
<dbReference type="OMA" id="LPWWTHY"/>
<dbReference type="OrthoDB" id="71310at2759"/>
<dbReference type="PAN-GO" id="Q9NPB0">
    <property type="GO annotations" value="0 GO annotations based on evolutionary models"/>
</dbReference>
<dbReference type="PhylomeDB" id="Q9NPB0"/>
<dbReference type="TreeFam" id="TF106140"/>
<dbReference type="PathwayCommons" id="Q9NPB0"/>
<dbReference type="SignaLink" id="Q9NPB0"/>
<dbReference type="BioGRID-ORCS" id="55776">
    <property type="hits" value="9 hits in 1155 CRISPR screens"/>
</dbReference>
<dbReference type="ChiTaRS" id="SAYSD1">
    <property type="organism name" value="human"/>
</dbReference>
<dbReference type="GenomeRNAi" id="55776"/>
<dbReference type="Pharos" id="Q9NPB0">
    <property type="development level" value="Tdark"/>
</dbReference>
<dbReference type="PRO" id="PR:Q9NPB0"/>
<dbReference type="Proteomes" id="UP000005640">
    <property type="component" value="Chromosome 6"/>
</dbReference>
<dbReference type="RNAct" id="Q9NPB0">
    <property type="molecule type" value="protein"/>
</dbReference>
<dbReference type="Bgee" id="ENSG00000112167">
    <property type="expression patterns" value="Expressed in left testis and 168 other cell types or tissues"/>
</dbReference>
<dbReference type="GO" id="GO:0030659">
    <property type="term" value="C:cytoplasmic vesicle membrane"/>
    <property type="evidence" value="ECO:0007669"/>
    <property type="project" value="UniProtKB-SubCell"/>
</dbReference>
<dbReference type="GO" id="GO:0005783">
    <property type="term" value="C:endoplasmic reticulum"/>
    <property type="evidence" value="ECO:0000314"/>
    <property type="project" value="UniProtKB"/>
</dbReference>
<dbReference type="GO" id="GO:0005789">
    <property type="term" value="C:endoplasmic reticulum membrane"/>
    <property type="evidence" value="ECO:0007669"/>
    <property type="project" value="UniProtKB-SubCell"/>
</dbReference>
<dbReference type="GO" id="GO:0043231">
    <property type="term" value="C:intracellular membrane-bounded organelle"/>
    <property type="evidence" value="ECO:0000314"/>
    <property type="project" value="HPA"/>
</dbReference>
<dbReference type="GO" id="GO:0141185">
    <property type="term" value="F:UFM1-modified protein reader activity"/>
    <property type="evidence" value="ECO:0000314"/>
    <property type="project" value="UniProtKB"/>
</dbReference>
<dbReference type="GO" id="GO:0006515">
    <property type="term" value="P:protein quality control for misfolded or incompletely synthesized proteins"/>
    <property type="evidence" value="ECO:0000314"/>
    <property type="project" value="UniProtKB"/>
</dbReference>
<dbReference type="GO" id="GO:0072344">
    <property type="term" value="P:rescue of stalled ribosome"/>
    <property type="evidence" value="ECO:0000314"/>
    <property type="project" value="UniProtKB"/>
</dbReference>
<dbReference type="InterPro" id="IPR039159">
    <property type="entry name" value="SAYSD1"/>
</dbReference>
<dbReference type="InterPro" id="IPR019387">
    <property type="entry name" value="SAYSvFN_dom"/>
</dbReference>
<dbReference type="PANTHER" id="PTHR13527">
    <property type="entry name" value="SAYSVFN DOMAIN-CONTAINING PROTEIN 1"/>
    <property type="match status" value="1"/>
</dbReference>
<dbReference type="PANTHER" id="PTHR13527:SF0">
    <property type="entry name" value="SAYSVFN DOMAIN-CONTAINING PROTEIN 1"/>
    <property type="match status" value="1"/>
</dbReference>
<dbReference type="Pfam" id="PF10260">
    <property type="entry name" value="SAYSvFN"/>
    <property type="match status" value="1"/>
</dbReference>